<name>NUP62_MOUSE</name>
<evidence type="ECO:0000250" key="1"/>
<evidence type="ECO:0000250" key="2">
    <source>
        <dbReference type="UniProtKB" id="P17955"/>
    </source>
</evidence>
<evidence type="ECO:0000250" key="3">
    <source>
        <dbReference type="UniProtKB" id="P37198"/>
    </source>
</evidence>
<evidence type="ECO:0000255" key="4"/>
<evidence type="ECO:0000256" key="5">
    <source>
        <dbReference type="SAM" id="MobiDB-lite"/>
    </source>
</evidence>
<evidence type="ECO:0000269" key="6">
    <source>
    </source>
</evidence>
<evidence type="ECO:0000303" key="7">
    <source>
    </source>
</evidence>
<evidence type="ECO:0000305" key="8"/>
<evidence type="ECO:0000305" key="9">
    <source>
    </source>
</evidence>
<evidence type="ECO:0007744" key="10">
    <source>
    </source>
</evidence>
<evidence type="ECO:0007744" key="11">
    <source>
    </source>
</evidence>
<comment type="function">
    <text evidence="3">Essential component of the nuclear pore complex. The N-terminal is probably involved in nucleocytoplasmic transport. The C-terminal is involved in protein-protein interaction probably via coiled-coil formation, promotes its association with centrosomes and may function in anchorage of p62 to the pore complex. Plays a role in mitotic cell cycle progression by regulating centrosome segregation, centriole maturation and spindle orientation. It might be involved in protein recruitment to the centrosome after nuclear breakdown.</text>
</comment>
<comment type="subunit">
    <text evidence="2 3">Component of the p62 complex, a complex at least composed of NUP62, NUP54, and NUP58. Interacts with NUP88. Interacts with NUTF2. Interacts with HIKESHI. Interacts with OSBPL8. Interacts with CAPG. Interacts with SAS6 and TUBG1 at the centrosome. Interacts with MCM3AP (By similarity).</text>
</comment>
<comment type="subcellular location">
    <subcellularLocation>
        <location evidence="3">Nucleus</location>
        <location evidence="3">Nuclear pore complex</location>
    </subcellularLocation>
    <subcellularLocation>
        <location evidence="3">Cytoplasm</location>
        <location evidence="3">Cytoskeleton</location>
        <location evidence="3">Spindle pole</location>
    </subcellularLocation>
    <subcellularLocation>
        <location evidence="3">Nucleus envelope</location>
    </subcellularLocation>
    <subcellularLocation>
        <location evidence="3">Cytoplasm</location>
        <location evidence="3">Cytoskeleton</location>
        <location evidence="3">Microtubule organizing center</location>
        <location evidence="3">Centrosome</location>
    </subcellularLocation>
    <text evidence="3">Central region of the nuclear pore, within the transporter. During mitotic cell division, it associates with the poles of the mitotic spindle.</text>
</comment>
<comment type="domain">
    <text>Contains FG repeats.</text>
</comment>
<comment type="PTM">
    <text evidence="7">O-glycosylated.</text>
</comment>
<comment type="PTM">
    <text>The inner channel of the NPC has a different redox environment from the cytoplasm and allows the formation of interchain disulfide bonds between some nucleoporins, the significant increase of these linkages upon oxidative stress reduces the permeability of the NPC.</text>
</comment>
<comment type="similarity">
    <text evidence="8">Belongs to the nucleoporin NSP1/NUP62 family.</text>
</comment>
<sequence>MSGFNFGGTGAPAGGFTFGTAKTATTTPATGFSFSASGTGTGGFNFGTPSQPAATTPSTSLFSLTTQTPTTQTPGFNFGTTPASGGTGFSLGISTPKLSLSNAAATPATANTGSFGLGSSTLTNAISSGSTSNQGTAPTGFVFGSSTTSAPSTGSTGFSFTSGSASQPGASGFSLGSVGSSAQPTALSGSPFTPATLVTTTAGATQPAAAAPTAATTSAGSTLFASIAAAPASSSATGLSLPAPVTTAATPSAGTLGFSLKAPGAAPGASTTSTTTTTTTTTTTAAAAAASTTTTGFALSLKPLVSAGPSSVAATALPASSTAAGTATGPAMTYAQLESLINKWSLELEDQERHFLQQATQVNAWDRTLIENGEKITSLHREVEKVKLDQKRLDQELDFILSQQKELEDLLSPLEESVKEQSGTIYLQHADEEREKTYKLAENIDAQLKRMAQDLKDIIEHLNMAGGPADTSDPLQQICKILNAHMDSLQWVDQSSALLQRRVEEASRVCEGRRKEQERSLRIAFD</sequence>
<organism>
    <name type="scientific">Mus musculus</name>
    <name type="common">Mouse</name>
    <dbReference type="NCBI Taxonomy" id="10090"/>
    <lineage>
        <taxon>Eukaryota</taxon>
        <taxon>Metazoa</taxon>
        <taxon>Chordata</taxon>
        <taxon>Craniata</taxon>
        <taxon>Vertebrata</taxon>
        <taxon>Euteleostomi</taxon>
        <taxon>Mammalia</taxon>
        <taxon>Eutheria</taxon>
        <taxon>Euarchontoglires</taxon>
        <taxon>Glires</taxon>
        <taxon>Rodentia</taxon>
        <taxon>Myomorpha</taxon>
        <taxon>Muroidea</taxon>
        <taxon>Muridae</taxon>
        <taxon>Murinae</taxon>
        <taxon>Mus</taxon>
        <taxon>Mus</taxon>
    </lineage>
</organism>
<proteinExistence type="evidence at protein level"/>
<dbReference type="EMBL" id="S59342">
    <property type="protein sequence ID" value="AAB19953.1"/>
    <property type="molecule type" value="mRNA"/>
</dbReference>
<dbReference type="EMBL" id="BC005784">
    <property type="protein sequence ID" value="AAH05784.1"/>
    <property type="molecule type" value="mRNA"/>
</dbReference>
<dbReference type="CCDS" id="CCDS21216.1"/>
<dbReference type="PIR" id="A56573">
    <property type="entry name" value="A56573"/>
</dbReference>
<dbReference type="RefSeq" id="NP_444304.1">
    <property type="nucleotide sequence ID" value="NM_053074.2"/>
</dbReference>
<dbReference type="SMR" id="Q63850"/>
<dbReference type="BioGRID" id="201879">
    <property type="interactions" value="14"/>
</dbReference>
<dbReference type="ComplexPortal" id="CPX-4474">
    <property type="entry name" value="Nuclear pore complex"/>
</dbReference>
<dbReference type="FunCoup" id="Q63850">
    <property type="interactions" value="1647"/>
</dbReference>
<dbReference type="IntAct" id="Q63850">
    <property type="interactions" value="1"/>
</dbReference>
<dbReference type="MINT" id="Q63850"/>
<dbReference type="STRING" id="10090.ENSMUSP00000056785"/>
<dbReference type="GlyCosmos" id="Q63850">
    <property type="glycosylation" value="2 sites, No reported glycans"/>
</dbReference>
<dbReference type="GlyGen" id="Q63850">
    <property type="glycosylation" value="6 sites, 1 O-linked glycan (1 site)"/>
</dbReference>
<dbReference type="iPTMnet" id="Q63850"/>
<dbReference type="PhosphoSitePlus" id="Q63850"/>
<dbReference type="SwissPalm" id="Q63850"/>
<dbReference type="PaxDb" id="10090-ENSMUSP00000056785"/>
<dbReference type="ProteomicsDB" id="293814"/>
<dbReference type="Pumba" id="Q63850"/>
<dbReference type="Antibodypedia" id="1686">
    <property type="antibodies" value="373 antibodies from 38 providers"/>
</dbReference>
<dbReference type="DNASU" id="18226"/>
<dbReference type="Ensembl" id="ENSMUST00000057195.17">
    <property type="protein sequence ID" value="ENSMUSP00000056785.10"/>
    <property type="gene ID" value="ENSMUSG00000109511.2"/>
</dbReference>
<dbReference type="Ensembl" id="ENSMUST00000207103.2">
    <property type="protein sequence ID" value="ENSMUSP00000147181.2"/>
    <property type="gene ID" value="ENSMUSG00000109511.2"/>
</dbReference>
<dbReference type="Ensembl" id="ENSMUST00000208626.2">
    <property type="protein sequence ID" value="ENSMUSP00000146695.2"/>
    <property type="gene ID" value="ENSMUSG00000109511.2"/>
</dbReference>
<dbReference type="GeneID" id="18226"/>
<dbReference type="KEGG" id="mmu:18226"/>
<dbReference type="UCSC" id="uc009gqw.2">
    <property type="organism name" value="mouse"/>
</dbReference>
<dbReference type="AGR" id="MGI:1351500"/>
<dbReference type="CTD" id="23636"/>
<dbReference type="MGI" id="MGI:1351500">
    <property type="gene designation" value="Nup62"/>
</dbReference>
<dbReference type="VEuPathDB" id="HostDB:ENSMUSG00000109511"/>
<dbReference type="eggNOG" id="KOG2196">
    <property type="taxonomic scope" value="Eukaryota"/>
</dbReference>
<dbReference type="GeneTree" id="ENSGT00940000161737"/>
<dbReference type="HOGENOM" id="CLU_025936_0_0_1"/>
<dbReference type="InParanoid" id="Q63850"/>
<dbReference type="OMA" id="EMMSKQV"/>
<dbReference type="OrthoDB" id="344345at2759"/>
<dbReference type="PhylomeDB" id="Q63850"/>
<dbReference type="TreeFam" id="TF324795"/>
<dbReference type="Reactome" id="R-MMU-159227">
    <property type="pathway name" value="Transport of the SLBP independent Mature mRNA"/>
</dbReference>
<dbReference type="Reactome" id="R-MMU-159230">
    <property type="pathway name" value="Transport of the SLBP Dependant Mature mRNA"/>
</dbReference>
<dbReference type="Reactome" id="R-MMU-159231">
    <property type="pathway name" value="Transport of Mature mRNA Derived from an Intronless Transcript"/>
</dbReference>
<dbReference type="Reactome" id="R-MMU-159236">
    <property type="pathway name" value="Transport of Mature mRNA derived from an Intron-Containing Transcript"/>
</dbReference>
<dbReference type="Reactome" id="R-MMU-170822">
    <property type="pathway name" value="Regulation of Glucokinase by Glucokinase Regulatory Protein"/>
</dbReference>
<dbReference type="Reactome" id="R-MMU-191859">
    <property type="pathway name" value="snRNP Assembly"/>
</dbReference>
<dbReference type="Reactome" id="R-MMU-3108214">
    <property type="pathway name" value="SUMOylation of DNA damage response and repair proteins"/>
</dbReference>
<dbReference type="Reactome" id="R-MMU-3232142">
    <property type="pathway name" value="SUMOylation of ubiquitinylation proteins"/>
</dbReference>
<dbReference type="Reactome" id="R-MMU-3301854">
    <property type="pathway name" value="Nuclear Pore Complex (NPC) Disassembly"/>
</dbReference>
<dbReference type="Reactome" id="R-MMU-3371453">
    <property type="pathway name" value="Regulation of HSF1-mediated heat shock response"/>
</dbReference>
<dbReference type="Reactome" id="R-MMU-4085377">
    <property type="pathway name" value="SUMOylation of SUMOylation proteins"/>
</dbReference>
<dbReference type="Reactome" id="R-MMU-4551638">
    <property type="pathway name" value="SUMOylation of chromatin organization proteins"/>
</dbReference>
<dbReference type="Reactome" id="R-MMU-4570464">
    <property type="pathway name" value="SUMOylation of RNA binding proteins"/>
</dbReference>
<dbReference type="Reactome" id="R-MMU-4615885">
    <property type="pathway name" value="SUMOylation of DNA replication proteins"/>
</dbReference>
<dbReference type="Reactome" id="R-MMU-5578749">
    <property type="pathway name" value="Transcriptional regulation by small RNAs"/>
</dbReference>
<dbReference type="BioGRID-ORCS" id="18226">
    <property type="hits" value="18 hits in 77 CRISPR screens"/>
</dbReference>
<dbReference type="ChiTaRS" id="Nup62">
    <property type="organism name" value="mouse"/>
</dbReference>
<dbReference type="PRO" id="PR:Q63850"/>
<dbReference type="Proteomes" id="UP000000589">
    <property type="component" value="Chromosome 7"/>
</dbReference>
<dbReference type="RNAct" id="Q63850">
    <property type="molecule type" value="protein"/>
</dbReference>
<dbReference type="Bgee" id="ENSMUSG00000109511">
    <property type="expression patterns" value="Expressed in floor plate of midbrain and 256 other cell types or tissues"/>
</dbReference>
<dbReference type="ExpressionAtlas" id="Q63850">
    <property type="expression patterns" value="baseline and differential"/>
</dbReference>
<dbReference type="GO" id="GO:0005813">
    <property type="term" value="C:centrosome"/>
    <property type="evidence" value="ECO:0007669"/>
    <property type="project" value="UniProtKB-SubCell"/>
</dbReference>
<dbReference type="GO" id="GO:0005737">
    <property type="term" value="C:cytoplasm"/>
    <property type="evidence" value="ECO:0007669"/>
    <property type="project" value="UniProtKB-KW"/>
</dbReference>
<dbReference type="GO" id="GO:0090543">
    <property type="term" value="C:Flemming body"/>
    <property type="evidence" value="ECO:0007669"/>
    <property type="project" value="Ensembl"/>
</dbReference>
<dbReference type="GO" id="GO:0072686">
    <property type="term" value="C:mitotic spindle"/>
    <property type="evidence" value="ECO:0007669"/>
    <property type="project" value="Ensembl"/>
</dbReference>
<dbReference type="GO" id="GO:0005635">
    <property type="term" value="C:nuclear envelope"/>
    <property type="evidence" value="ECO:0000266"/>
    <property type="project" value="ComplexPortal"/>
</dbReference>
<dbReference type="GO" id="GO:0031965">
    <property type="term" value="C:nuclear membrane"/>
    <property type="evidence" value="ECO:0000314"/>
    <property type="project" value="MGI"/>
</dbReference>
<dbReference type="GO" id="GO:0005643">
    <property type="term" value="C:nuclear pore"/>
    <property type="evidence" value="ECO:0000314"/>
    <property type="project" value="MGI"/>
</dbReference>
<dbReference type="GO" id="GO:0005654">
    <property type="term" value="C:nucleoplasm"/>
    <property type="evidence" value="ECO:0007669"/>
    <property type="project" value="Ensembl"/>
</dbReference>
<dbReference type="GO" id="GO:1990904">
    <property type="term" value="C:ribonucleoprotein complex"/>
    <property type="evidence" value="ECO:0000266"/>
    <property type="project" value="MGI"/>
</dbReference>
<dbReference type="GO" id="GO:0000922">
    <property type="term" value="C:spindle pole"/>
    <property type="evidence" value="ECO:0007669"/>
    <property type="project" value="UniProtKB-SubCell"/>
</dbReference>
<dbReference type="GO" id="GO:0030544">
    <property type="term" value="F:Hsp70 protein binding"/>
    <property type="evidence" value="ECO:0000314"/>
    <property type="project" value="MGI"/>
</dbReference>
<dbReference type="GO" id="GO:0051879">
    <property type="term" value="F:Hsp90 protein binding"/>
    <property type="evidence" value="ECO:0000314"/>
    <property type="project" value="MGI"/>
</dbReference>
<dbReference type="GO" id="GO:0046966">
    <property type="term" value="F:nuclear thyroid hormone receptor binding"/>
    <property type="evidence" value="ECO:0000250"/>
    <property type="project" value="UniProtKB"/>
</dbReference>
<dbReference type="GO" id="GO:0051425">
    <property type="term" value="F:PTB domain binding"/>
    <property type="evidence" value="ECO:0000353"/>
    <property type="project" value="UniProtKB"/>
</dbReference>
<dbReference type="GO" id="GO:0042169">
    <property type="term" value="F:SH2 domain binding"/>
    <property type="evidence" value="ECO:0000250"/>
    <property type="project" value="UniProtKB"/>
</dbReference>
<dbReference type="GO" id="GO:0030159">
    <property type="term" value="F:signaling receptor complex adaptor activity"/>
    <property type="evidence" value="ECO:0000250"/>
    <property type="project" value="UniProtKB"/>
</dbReference>
<dbReference type="GO" id="GO:0017056">
    <property type="term" value="F:structural constituent of nuclear pore"/>
    <property type="evidence" value="ECO:0007669"/>
    <property type="project" value="InterPro"/>
</dbReference>
<dbReference type="GO" id="GO:0043130">
    <property type="term" value="F:ubiquitin binding"/>
    <property type="evidence" value="ECO:0000250"/>
    <property type="project" value="UniProtKB"/>
</dbReference>
<dbReference type="GO" id="GO:0016477">
    <property type="term" value="P:cell migration"/>
    <property type="evidence" value="ECO:0000303"/>
    <property type="project" value="UniProtKB"/>
</dbReference>
<dbReference type="GO" id="GO:0007166">
    <property type="term" value="P:cell surface receptor signaling pathway"/>
    <property type="evidence" value="ECO:0000250"/>
    <property type="project" value="UniProtKB"/>
</dbReference>
<dbReference type="GO" id="GO:0090398">
    <property type="term" value="P:cellular senescence"/>
    <property type="evidence" value="ECO:0000314"/>
    <property type="project" value="MGI"/>
</dbReference>
<dbReference type="GO" id="GO:0098534">
    <property type="term" value="P:centriole assembly"/>
    <property type="evidence" value="ECO:0007669"/>
    <property type="project" value="Ensembl"/>
</dbReference>
<dbReference type="GO" id="GO:0007100">
    <property type="term" value="P:mitotic centrosome separation"/>
    <property type="evidence" value="ECO:0007669"/>
    <property type="project" value="Ensembl"/>
</dbReference>
<dbReference type="GO" id="GO:0007080">
    <property type="term" value="P:mitotic metaphase chromosome alignment"/>
    <property type="evidence" value="ECO:0007669"/>
    <property type="project" value="Ensembl"/>
</dbReference>
<dbReference type="GO" id="GO:0051028">
    <property type="term" value="P:mRNA transport"/>
    <property type="evidence" value="ECO:0007669"/>
    <property type="project" value="UniProtKB-KW"/>
</dbReference>
<dbReference type="GO" id="GO:0043066">
    <property type="term" value="P:negative regulation of apoptotic process"/>
    <property type="evidence" value="ECO:0000250"/>
    <property type="project" value="UniProtKB"/>
</dbReference>
<dbReference type="GO" id="GO:0008285">
    <property type="term" value="P:negative regulation of cell population proliferation"/>
    <property type="evidence" value="ECO:0000315"/>
    <property type="project" value="UniProtKB"/>
</dbReference>
<dbReference type="GO" id="GO:0042059">
    <property type="term" value="P:negative regulation of epidermal growth factor receptor signaling pathway"/>
    <property type="evidence" value="ECO:0000315"/>
    <property type="project" value="UniProtKB"/>
</dbReference>
<dbReference type="GO" id="GO:0043407">
    <property type="term" value="P:negative regulation of MAP kinase activity"/>
    <property type="evidence" value="ECO:0000315"/>
    <property type="project" value="UniProtKB"/>
</dbReference>
<dbReference type="GO" id="GO:0043069">
    <property type="term" value="P:negative regulation of programmed cell death"/>
    <property type="evidence" value="ECO:0000250"/>
    <property type="project" value="UniProtKB"/>
</dbReference>
<dbReference type="GO" id="GO:0046580">
    <property type="term" value="P:negative regulation of Ras protein signal transduction"/>
    <property type="evidence" value="ECO:0000315"/>
    <property type="project" value="UniProtKB"/>
</dbReference>
<dbReference type="GO" id="GO:0006913">
    <property type="term" value="P:nucleocytoplasmic transport"/>
    <property type="evidence" value="ECO:0000303"/>
    <property type="project" value="ComplexPortal"/>
</dbReference>
<dbReference type="GO" id="GO:0043123">
    <property type="term" value="P:positive regulation of canonical NF-kappaB signal transduction"/>
    <property type="evidence" value="ECO:0000250"/>
    <property type="project" value="UniProtKB"/>
</dbReference>
<dbReference type="GO" id="GO:0046601">
    <property type="term" value="P:positive regulation of centriole replication"/>
    <property type="evidence" value="ECO:0007669"/>
    <property type="project" value="Ensembl"/>
</dbReference>
<dbReference type="GO" id="GO:0045893">
    <property type="term" value="P:positive regulation of DNA-templated transcription"/>
    <property type="evidence" value="ECO:0007669"/>
    <property type="project" value="Ensembl"/>
</dbReference>
<dbReference type="GO" id="GO:1903438">
    <property type="term" value="P:positive regulation of mitotic cytokinetic process"/>
    <property type="evidence" value="ECO:0007669"/>
    <property type="project" value="Ensembl"/>
</dbReference>
<dbReference type="GO" id="GO:0045840">
    <property type="term" value="P:positive regulation of mitotic nuclear division"/>
    <property type="evidence" value="ECO:0007669"/>
    <property type="project" value="Ensembl"/>
</dbReference>
<dbReference type="GO" id="GO:1904781">
    <property type="term" value="P:positive regulation of protein localization to centrosome"/>
    <property type="evidence" value="ECO:0007669"/>
    <property type="project" value="Ensembl"/>
</dbReference>
<dbReference type="GO" id="GO:0015031">
    <property type="term" value="P:protein transport"/>
    <property type="evidence" value="ECO:0007669"/>
    <property type="project" value="UniProtKB-KW"/>
</dbReference>
<dbReference type="GO" id="GO:0060236">
    <property type="term" value="P:regulation of mitotic spindle organization"/>
    <property type="evidence" value="ECO:0007669"/>
    <property type="project" value="Ensembl"/>
</dbReference>
<dbReference type="FunFam" id="1.20.5.170:FF:000045">
    <property type="entry name" value="nuclear pore glycoprotein p62"/>
    <property type="match status" value="1"/>
</dbReference>
<dbReference type="Gene3D" id="1.20.5.170">
    <property type="match status" value="1"/>
</dbReference>
<dbReference type="InterPro" id="IPR026010">
    <property type="entry name" value="NSP1/NUP62"/>
</dbReference>
<dbReference type="InterPro" id="IPR007758">
    <property type="entry name" value="Nucleoporin_NSP1_C"/>
</dbReference>
<dbReference type="PANTHER" id="PTHR12084:SF14">
    <property type="entry name" value="NUCLEAR PORE GLYCOPROTEIN P62"/>
    <property type="match status" value="1"/>
</dbReference>
<dbReference type="PANTHER" id="PTHR12084">
    <property type="entry name" value="NUCLEAR PORE GLYCOPROTEIN P62-RELATED"/>
    <property type="match status" value="1"/>
</dbReference>
<dbReference type="Pfam" id="PF05064">
    <property type="entry name" value="Nsp1_C"/>
    <property type="match status" value="1"/>
</dbReference>
<keyword id="KW-0007">Acetylation</keyword>
<keyword id="KW-0175">Coiled coil</keyword>
<keyword id="KW-0963">Cytoplasm</keyword>
<keyword id="KW-0206">Cytoskeleton</keyword>
<keyword id="KW-1015">Disulfide bond</keyword>
<keyword id="KW-0325">Glycoprotein</keyword>
<keyword id="KW-0509">mRNA transport</keyword>
<keyword id="KW-0906">Nuclear pore complex</keyword>
<keyword id="KW-0539">Nucleus</keyword>
<keyword id="KW-0597">Phosphoprotein</keyword>
<keyword id="KW-0653">Protein transport</keyword>
<keyword id="KW-1185">Reference proteome</keyword>
<keyword id="KW-0677">Repeat</keyword>
<keyword id="KW-0811">Translocation</keyword>
<keyword id="KW-0813">Transport</keyword>
<accession>Q63850</accession>
<accession>Q99JN7</accession>
<feature type="initiator methionine" description="Removed" evidence="3">
    <location>
        <position position="1"/>
    </location>
</feature>
<feature type="chain" id="PRO_0000204881" description="Nuclear pore glycoprotein p62">
    <location>
        <begin position="2"/>
        <end position="526"/>
    </location>
</feature>
<feature type="repeat" description="1" evidence="3">
    <location>
        <begin position="6"/>
        <end position="7"/>
    </location>
</feature>
<feature type="repeat" description="2" evidence="3">
    <location>
        <begin position="46"/>
        <end position="47"/>
    </location>
</feature>
<feature type="repeat" description="3" evidence="3">
    <location>
        <begin position="78"/>
        <end position="79"/>
    </location>
</feature>
<feature type="repeat" description="4" evidence="3">
    <location>
        <begin position="115"/>
        <end position="116"/>
    </location>
</feature>
<feature type="repeat" description="5" evidence="3">
    <location>
        <begin position="143"/>
        <end position="144"/>
    </location>
</feature>
<feature type="region of interest" description="5 X 2 AA repeats of F-G" evidence="3">
    <location>
        <begin position="6"/>
        <end position="144"/>
    </location>
</feature>
<feature type="region of interest" description="Disordered" evidence="5">
    <location>
        <begin position="43"/>
        <end position="82"/>
    </location>
</feature>
<feature type="region of interest" description="Disordered" evidence="5">
    <location>
        <begin position="128"/>
        <end position="148"/>
    </location>
</feature>
<feature type="region of interest" description="Required for centrosome localization" evidence="3">
    <location>
        <begin position="332"/>
        <end position="462"/>
    </location>
</feature>
<feature type="coiled-coil region" evidence="4">
    <location>
        <begin position="332"/>
        <end position="462"/>
    </location>
</feature>
<feature type="compositionally biased region" description="Low complexity" evidence="5">
    <location>
        <begin position="46"/>
        <end position="81"/>
    </location>
</feature>
<feature type="compositionally biased region" description="Polar residues" evidence="5">
    <location>
        <begin position="128"/>
        <end position="137"/>
    </location>
</feature>
<feature type="modified residue" description="N-acetylserine" evidence="3">
    <location>
        <position position="2"/>
    </location>
</feature>
<feature type="modified residue" description="Phosphoserine" evidence="10 11">
    <location>
        <position position="412"/>
    </location>
</feature>
<feature type="modified residue" description="Phosphoserine" evidence="3">
    <location>
        <position position="422"/>
    </location>
</feature>
<feature type="glycosylation site" description="O-linked (GlcNAc) threonine" evidence="1">
    <location>
        <position position="377"/>
    </location>
</feature>
<feature type="glycosylation site" description="O-linked (GlcNAc) serine" evidence="1">
    <location>
        <position position="472"/>
    </location>
</feature>
<feature type="disulfide bond" description="Interchain (with NUP155)" evidence="9">
    <location>
        <position position="479"/>
    </location>
</feature>
<feature type="disulfide bond" description="Interchain (with NUP155)" evidence="9">
    <location>
        <position position="510"/>
    </location>
</feature>
<feature type="mutagenesis site" description="Loss of reduction of influx rate of NLS cargo upon oxidative stress; when associated with S-509." evidence="6">
    <original>C</original>
    <variation>S</variation>
    <location>
        <position position="479"/>
    </location>
</feature>
<feature type="mutagenesis site" description="Loss of reduction of influx rate of NLS cargo upon oxidative stress; when associated with S-478." evidence="6">
    <original>C</original>
    <variation>S</variation>
    <location>
        <position position="510"/>
    </location>
</feature>
<feature type="sequence conflict" description="In Ref. 1; AAB19953." evidence="8" ref="1">
    <original>G</original>
    <variation>V</variation>
    <location>
        <position position="113"/>
    </location>
</feature>
<feature type="sequence conflict" description="In Ref. 1; AAB19953." evidence="8" ref="1">
    <original>A</original>
    <variation>V</variation>
    <location>
        <position position="319"/>
    </location>
</feature>
<protein>
    <recommendedName>
        <fullName>Nuclear pore glycoprotein p62</fullName>
    </recommendedName>
    <alternativeName>
        <fullName>62 kDa nucleoporin</fullName>
    </alternativeName>
    <alternativeName>
        <fullName>Nucleoporin Nup62</fullName>
    </alternativeName>
</protein>
<reference key="1">
    <citation type="journal article" date="1991" name="Eur. J. Cell Biol.">
        <title>Nuclear pore complex glycoprotein p62 of Xenopus laevis and mouse: cDNA cloning and identification of its glycosylated region.</title>
        <authorList>
            <person name="Cordes V."/>
            <person name="Waizenegger I."/>
            <person name="Krohne G."/>
        </authorList>
    </citation>
    <scope>NUCLEOTIDE SEQUENCE [MRNA]</scope>
</reference>
<reference key="2">
    <citation type="journal article" date="2004" name="Genome Res.">
        <title>The status, quality, and expansion of the NIH full-length cDNA project: the Mammalian Gene Collection (MGC).</title>
        <authorList>
            <consortium name="The MGC Project Team"/>
        </authorList>
    </citation>
    <scope>NUCLEOTIDE SEQUENCE [LARGE SCALE MRNA]</scope>
</reference>
<reference key="3">
    <citation type="journal article" date="2009" name="Immunity">
        <title>The phagosomal proteome in interferon-gamma-activated macrophages.</title>
        <authorList>
            <person name="Trost M."/>
            <person name="English L."/>
            <person name="Lemieux S."/>
            <person name="Courcelles M."/>
            <person name="Desjardins M."/>
            <person name="Thibault P."/>
        </authorList>
    </citation>
    <scope>PHOSPHORYLATION [LARGE SCALE ANALYSIS] AT SER-412</scope>
    <scope>IDENTIFICATION BY MASS SPECTROMETRY [LARGE SCALE ANALYSIS]</scope>
</reference>
<reference key="4">
    <citation type="journal article" date="2010" name="Cell">
        <title>A tissue-specific atlas of mouse protein phosphorylation and expression.</title>
        <authorList>
            <person name="Huttlin E.L."/>
            <person name="Jedrychowski M.P."/>
            <person name="Elias J.E."/>
            <person name="Goswami T."/>
            <person name="Rad R."/>
            <person name="Beausoleil S.A."/>
            <person name="Villen J."/>
            <person name="Haas W."/>
            <person name="Sowa M.E."/>
            <person name="Gygi S.P."/>
        </authorList>
    </citation>
    <scope>PHOSPHORYLATION [LARGE SCALE ANALYSIS] AT SER-412</scope>
    <scope>IDENTIFICATION BY MASS SPECTROMETRY [LARGE SCALE ANALYSIS]</scope>
    <source>
        <tissue>Brain</tissue>
        <tissue>Heart</tissue>
        <tissue>Lung</tissue>
        <tissue>Pancreas</tissue>
        <tissue>Spleen</tissue>
        <tissue>Testis</tissue>
    </source>
</reference>
<reference key="5">
    <citation type="journal article" date="2013" name="J. Cell Sci.">
        <title>Intermolecular disulfide bonds between nucleoporins regulate karyopherin-dependent nuclear transport.</title>
        <authorList>
            <person name="Yoshimura S.H."/>
            <person name="Otsuka S."/>
            <person name="Kumeta M."/>
            <person name="Taga M."/>
            <person name="Takeyasu K."/>
        </authorList>
    </citation>
    <scope>DISULFIDE BONDS</scope>
    <scope>MUTAGENESIS OF CYS-479 AND CYS-510</scope>
</reference>
<gene>
    <name type="primary">Nup62</name>
</gene>